<dbReference type="EC" id="3.5.1.3" evidence="4 5"/>
<dbReference type="EMBL" id="AF284573">
    <property type="protein sequence ID" value="AAF87102.1"/>
    <property type="molecule type" value="mRNA"/>
</dbReference>
<dbReference type="EMBL" id="AK003604">
    <property type="protein sequence ID" value="BAB22884.1"/>
    <property type="molecule type" value="mRNA"/>
</dbReference>
<dbReference type="EMBL" id="AK004535">
    <property type="protein sequence ID" value="BAB23354.1"/>
    <property type="molecule type" value="mRNA"/>
</dbReference>
<dbReference type="EMBL" id="BC020153">
    <property type="protein sequence ID" value="AAH20153.1"/>
    <property type="molecule type" value="mRNA"/>
</dbReference>
<dbReference type="CCDS" id="CCDS37363.1"/>
<dbReference type="RefSeq" id="NP_075664.1">
    <property type="nucleotide sequence ID" value="NM_023175.1"/>
</dbReference>
<dbReference type="PDB" id="2W1V">
    <property type="method" value="X-ray"/>
    <property type="resolution" value="1.49 A"/>
    <property type="chains" value="A/B=1-276"/>
</dbReference>
<dbReference type="PDBsum" id="2W1V"/>
<dbReference type="SMR" id="Q9JHW2"/>
<dbReference type="BioGRID" id="206703">
    <property type="interactions" value="1"/>
</dbReference>
<dbReference type="FunCoup" id="Q9JHW2">
    <property type="interactions" value="1959"/>
</dbReference>
<dbReference type="STRING" id="10090.ENSMUSP00000023432"/>
<dbReference type="GlyGen" id="Q9JHW2">
    <property type="glycosylation" value="1 site, 1 O-linked glycan (1 site)"/>
</dbReference>
<dbReference type="iPTMnet" id="Q9JHW2"/>
<dbReference type="PhosphoSitePlus" id="Q9JHW2"/>
<dbReference type="SwissPalm" id="Q9JHW2"/>
<dbReference type="REPRODUCTION-2DPAGE" id="IPI00119945"/>
<dbReference type="jPOST" id="Q9JHW2"/>
<dbReference type="PaxDb" id="10090-ENSMUSP00000023432"/>
<dbReference type="PeptideAtlas" id="Q9JHW2"/>
<dbReference type="ProteomicsDB" id="293566"/>
<dbReference type="Pumba" id="Q9JHW2"/>
<dbReference type="Antibodypedia" id="32221">
    <property type="antibodies" value="256 antibodies from 25 providers"/>
</dbReference>
<dbReference type="DNASU" id="52633"/>
<dbReference type="Ensembl" id="ENSMUST00000023432.10">
    <property type="protein sequence ID" value="ENSMUSP00000023432.9"/>
    <property type="gene ID" value="ENSMUSG00000022751.10"/>
</dbReference>
<dbReference type="GeneID" id="52633"/>
<dbReference type="KEGG" id="mmu:52633"/>
<dbReference type="UCSC" id="uc007zna.1">
    <property type="organism name" value="mouse"/>
</dbReference>
<dbReference type="AGR" id="MGI:1261838"/>
<dbReference type="CTD" id="56954"/>
<dbReference type="MGI" id="MGI:1261838">
    <property type="gene designation" value="Nit2"/>
</dbReference>
<dbReference type="VEuPathDB" id="HostDB:ENSMUSG00000022751"/>
<dbReference type="eggNOG" id="KOG0806">
    <property type="taxonomic scope" value="Eukaryota"/>
</dbReference>
<dbReference type="GeneTree" id="ENSGT00550000074838"/>
<dbReference type="HOGENOM" id="CLU_030130_1_0_1"/>
<dbReference type="InParanoid" id="Q9JHW2"/>
<dbReference type="OMA" id="MQSKPYA"/>
<dbReference type="OrthoDB" id="10250282at2759"/>
<dbReference type="PhylomeDB" id="Q9JHW2"/>
<dbReference type="TreeFam" id="TF300747"/>
<dbReference type="BioCyc" id="MetaCyc:MONOMER-18738"/>
<dbReference type="Reactome" id="R-MMU-6798695">
    <property type="pathway name" value="Neutrophil degranulation"/>
</dbReference>
<dbReference type="BioGRID-ORCS" id="52633">
    <property type="hits" value="1 hit in 76 CRISPR screens"/>
</dbReference>
<dbReference type="ChiTaRS" id="Nit2">
    <property type="organism name" value="mouse"/>
</dbReference>
<dbReference type="EvolutionaryTrace" id="Q9JHW2"/>
<dbReference type="PRO" id="PR:Q9JHW2"/>
<dbReference type="Proteomes" id="UP000000589">
    <property type="component" value="Chromosome 16"/>
</dbReference>
<dbReference type="RNAct" id="Q9JHW2">
    <property type="molecule type" value="protein"/>
</dbReference>
<dbReference type="Bgee" id="ENSMUSG00000022751">
    <property type="expression patterns" value="Expressed in right kidney and 240 other cell types or tissues"/>
</dbReference>
<dbReference type="ExpressionAtlas" id="Q9JHW2">
    <property type="expression patterns" value="baseline and differential"/>
</dbReference>
<dbReference type="GO" id="GO:0005813">
    <property type="term" value="C:centrosome"/>
    <property type="evidence" value="ECO:0007669"/>
    <property type="project" value="Ensembl"/>
</dbReference>
<dbReference type="GO" id="GO:0005829">
    <property type="term" value="C:cytosol"/>
    <property type="evidence" value="ECO:0007669"/>
    <property type="project" value="Ensembl"/>
</dbReference>
<dbReference type="GO" id="GO:0005739">
    <property type="term" value="C:mitochondrion"/>
    <property type="evidence" value="ECO:0007005"/>
    <property type="project" value="MGI"/>
</dbReference>
<dbReference type="GO" id="GO:0106008">
    <property type="term" value="F:2-oxoglutaramate amidase activity"/>
    <property type="evidence" value="ECO:0007669"/>
    <property type="project" value="RHEA"/>
</dbReference>
<dbReference type="GO" id="GO:0050152">
    <property type="term" value="F:omega-amidase activity"/>
    <property type="evidence" value="ECO:0007669"/>
    <property type="project" value="UniProtKB-EC"/>
</dbReference>
<dbReference type="GO" id="GO:0006528">
    <property type="term" value="P:asparagine metabolic process"/>
    <property type="evidence" value="ECO:0007669"/>
    <property type="project" value="Ensembl"/>
</dbReference>
<dbReference type="GO" id="GO:0006541">
    <property type="term" value="P:glutamine metabolic process"/>
    <property type="evidence" value="ECO:0007669"/>
    <property type="project" value="Ensembl"/>
</dbReference>
<dbReference type="GO" id="GO:0006107">
    <property type="term" value="P:oxaloacetate metabolic process"/>
    <property type="evidence" value="ECO:0007669"/>
    <property type="project" value="Ensembl"/>
</dbReference>
<dbReference type="CDD" id="cd07572">
    <property type="entry name" value="nit"/>
    <property type="match status" value="1"/>
</dbReference>
<dbReference type="FunFam" id="3.60.110.10:FF:000002">
    <property type="entry name" value="Nitrilase family member 2"/>
    <property type="match status" value="1"/>
</dbReference>
<dbReference type="Gene3D" id="3.60.110.10">
    <property type="entry name" value="Carbon-nitrogen hydrolase"/>
    <property type="match status" value="1"/>
</dbReference>
<dbReference type="InterPro" id="IPR003010">
    <property type="entry name" value="C-N_Hydrolase"/>
</dbReference>
<dbReference type="InterPro" id="IPR036526">
    <property type="entry name" value="C-N_Hydrolase_sf"/>
</dbReference>
<dbReference type="InterPro" id="IPR045254">
    <property type="entry name" value="Nit1/2_C-N_Hydrolase"/>
</dbReference>
<dbReference type="PANTHER" id="PTHR23088">
    <property type="entry name" value="NITRILASE-RELATED"/>
    <property type="match status" value="1"/>
</dbReference>
<dbReference type="PANTHER" id="PTHR23088:SF30">
    <property type="entry name" value="OMEGA-AMIDASE NIT2"/>
    <property type="match status" value="1"/>
</dbReference>
<dbReference type="Pfam" id="PF00795">
    <property type="entry name" value="CN_hydrolase"/>
    <property type="match status" value="1"/>
</dbReference>
<dbReference type="SUPFAM" id="SSF56317">
    <property type="entry name" value="Carbon-nitrogen hydrolase"/>
    <property type="match status" value="1"/>
</dbReference>
<dbReference type="PROSITE" id="PS50263">
    <property type="entry name" value="CN_HYDROLASE"/>
    <property type="match status" value="1"/>
</dbReference>
<sequence length="276" mass="30502">MSTFRLALIQLQVSSIKSDNLTRACSLVREAAKQGANIVSLPECFNSPYGTTYFPDYAEKIPGESTQKLSEVAKESSIYLIGGSIPEEDAGKLYNTCSVFGPDGSLLVKHRKIHLFDIDVPGKITFQESKTLSPGDSFSTFDTPYCKVGLGICYDMRFAELAQIYAQRGCQLLVYPGAFNLTTGPAHWELLQRARAVDNQVYVATASPARDDKASYVAWGHSTVVDPWGQVLTKAGTEETILYSDIDLKKLAEIRQQIPILKQKRADLYTVESKKP</sequence>
<evidence type="ECO:0000250" key="1">
    <source>
        <dbReference type="UniProtKB" id="Q9NQR4"/>
    </source>
</evidence>
<evidence type="ECO:0000255" key="2">
    <source>
        <dbReference type="PROSITE-ProRule" id="PRU00054"/>
    </source>
</evidence>
<evidence type="ECO:0000269" key="3">
    <source>
    </source>
</evidence>
<evidence type="ECO:0000269" key="4">
    <source>
    </source>
</evidence>
<evidence type="ECO:0000269" key="5">
    <source>
    </source>
</evidence>
<evidence type="ECO:0000303" key="6">
    <source>
    </source>
</evidence>
<evidence type="ECO:0000305" key="7"/>
<evidence type="ECO:0000305" key="8">
    <source>
    </source>
</evidence>
<evidence type="ECO:0007744" key="9">
    <source>
    </source>
</evidence>
<evidence type="ECO:0007744" key="10">
    <source>
    </source>
</evidence>
<evidence type="ECO:0007829" key="11">
    <source>
        <dbReference type="PDB" id="2W1V"/>
    </source>
</evidence>
<feature type="chain" id="PRO_0000320254" description="Omega-amidase NIT2">
    <location>
        <begin position="1"/>
        <end position="276"/>
    </location>
</feature>
<feature type="domain" description="CN hydrolase" evidence="2">
    <location>
        <begin position="4"/>
        <end position="248"/>
    </location>
</feature>
<feature type="active site" description="Proton acceptor" evidence="2">
    <location>
        <position position="43"/>
    </location>
</feature>
<feature type="active site" description="Proton donor" evidence="2">
    <location>
        <position position="112"/>
    </location>
</feature>
<feature type="active site" description="Nucleophile" evidence="2">
    <location>
        <position position="153"/>
    </location>
</feature>
<feature type="modified residue" description="Phosphoserine" evidence="1">
    <location>
        <position position="26"/>
    </location>
</feature>
<feature type="modified residue" description="N6-acetyllysine; alternate" evidence="9 10">
    <location>
        <position position="68"/>
    </location>
</feature>
<feature type="modified residue" description="N6-succinyllysine; alternate" evidence="10">
    <location>
        <position position="68"/>
    </location>
</feature>
<feature type="modified residue" description="N6-succinyllysine" evidence="10">
    <location>
        <position position="123"/>
    </location>
</feature>
<feature type="modified residue" description="N6-succinyllysine" evidence="10">
    <location>
        <position position="130"/>
    </location>
</feature>
<feature type="strand" evidence="11">
    <location>
        <begin position="3"/>
        <end position="10"/>
    </location>
</feature>
<feature type="helix" evidence="11">
    <location>
        <begin position="17"/>
        <end position="33"/>
    </location>
</feature>
<feature type="strand" evidence="11">
    <location>
        <begin position="37"/>
        <end position="40"/>
    </location>
</feature>
<feature type="turn" evidence="11">
    <location>
        <begin position="43"/>
        <end position="46"/>
    </location>
</feature>
<feature type="turn" evidence="11">
    <location>
        <begin position="51"/>
        <end position="53"/>
    </location>
</feature>
<feature type="helix" evidence="11">
    <location>
        <begin position="54"/>
        <end position="57"/>
    </location>
</feature>
<feature type="strand" evidence="11">
    <location>
        <begin position="61"/>
        <end position="63"/>
    </location>
</feature>
<feature type="helix" evidence="11">
    <location>
        <begin position="64"/>
        <end position="76"/>
    </location>
</feature>
<feature type="strand" evidence="11">
    <location>
        <begin position="78"/>
        <end position="81"/>
    </location>
</feature>
<feature type="strand" evidence="11">
    <location>
        <begin position="85"/>
        <end position="89"/>
    </location>
</feature>
<feature type="strand" evidence="11">
    <location>
        <begin position="92"/>
        <end position="100"/>
    </location>
</feature>
<feature type="strand" evidence="11">
    <location>
        <begin position="106"/>
        <end position="111"/>
    </location>
</feature>
<feature type="strand" evidence="11">
    <location>
        <begin position="117"/>
        <end position="120"/>
    </location>
</feature>
<feature type="turn" evidence="11">
    <location>
        <begin position="121"/>
        <end position="123"/>
    </location>
</feature>
<feature type="strand" evidence="11">
    <location>
        <begin position="124"/>
        <end position="127"/>
    </location>
</feature>
<feature type="helix" evidence="11">
    <location>
        <begin position="128"/>
        <end position="130"/>
    </location>
</feature>
<feature type="strand" evidence="11">
    <location>
        <begin position="140"/>
        <end position="142"/>
    </location>
</feature>
<feature type="strand" evidence="11">
    <location>
        <begin position="147"/>
        <end position="150"/>
    </location>
</feature>
<feature type="helix" evidence="11">
    <location>
        <begin position="153"/>
        <end position="157"/>
    </location>
</feature>
<feature type="helix" evidence="11">
    <location>
        <begin position="159"/>
        <end position="167"/>
    </location>
</feature>
<feature type="strand" evidence="11">
    <location>
        <begin position="170"/>
        <end position="176"/>
    </location>
</feature>
<feature type="helix" evidence="11">
    <location>
        <begin position="183"/>
        <end position="199"/>
    </location>
</feature>
<feature type="strand" evidence="11">
    <location>
        <begin position="202"/>
        <end position="206"/>
    </location>
</feature>
<feature type="strand" evidence="11">
    <location>
        <begin position="214"/>
        <end position="216"/>
    </location>
</feature>
<feature type="strand" evidence="11">
    <location>
        <begin position="223"/>
        <end position="225"/>
    </location>
</feature>
<feature type="strand" evidence="11">
    <location>
        <begin position="231"/>
        <end position="234"/>
    </location>
</feature>
<feature type="strand" evidence="11">
    <location>
        <begin position="237"/>
        <end position="247"/>
    </location>
</feature>
<feature type="helix" evidence="11">
    <location>
        <begin position="248"/>
        <end position="257"/>
    </location>
</feature>
<feature type="helix" evidence="11">
    <location>
        <begin position="260"/>
        <end position="262"/>
    </location>
</feature>
<feature type="turn" evidence="11">
    <location>
        <begin position="266"/>
        <end position="268"/>
    </location>
</feature>
<feature type="strand" evidence="11">
    <location>
        <begin position="269"/>
        <end position="273"/>
    </location>
</feature>
<proteinExistence type="evidence at protein level"/>
<keyword id="KW-0002">3D-structure</keyword>
<keyword id="KW-0007">Acetylation</keyword>
<keyword id="KW-0963">Cytoplasm</keyword>
<keyword id="KW-0378">Hydrolase</keyword>
<keyword id="KW-0597">Phosphoprotein</keyword>
<keyword id="KW-1185">Reference proteome</keyword>
<gene>
    <name evidence="6" type="primary">Nit2</name>
    <name type="synonym">D16Ertd502e</name>
</gene>
<accession>Q9JHW2</accession>
<accession>Q9CTG9</accession>
<name>NIT2_MOUSE</name>
<organism>
    <name type="scientific">Mus musculus</name>
    <name type="common">Mouse</name>
    <dbReference type="NCBI Taxonomy" id="10090"/>
    <lineage>
        <taxon>Eukaryota</taxon>
        <taxon>Metazoa</taxon>
        <taxon>Chordata</taxon>
        <taxon>Craniata</taxon>
        <taxon>Vertebrata</taxon>
        <taxon>Euteleostomi</taxon>
        <taxon>Mammalia</taxon>
        <taxon>Eutheria</taxon>
        <taxon>Euarchontoglires</taxon>
        <taxon>Glires</taxon>
        <taxon>Rodentia</taxon>
        <taxon>Myomorpha</taxon>
        <taxon>Muroidea</taxon>
        <taxon>Muridae</taxon>
        <taxon>Murinae</taxon>
        <taxon>Mus</taxon>
        <taxon>Mus</taxon>
    </lineage>
</organism>
<reference key="1">
    <citation type="journal article" date="2000" name="Curr. Biol.">
        <title>Crystal structure of the worm NitFhit Rosetta stone protein reveals a Nit tetramer binding two Fhit dimers.</title>
        <authorList>
            <person name="Pace H.C."/>
            <person name="Hodawadekar S.C."/>
            <person name="Draganescu A."/>
            <person name="Huang J."/>
            <person name="Bieganowski P."/>
            <person name="Pekarsky Y."/>
            <person name="Croce C.M."/>
            <person name="Brenner C."/>
        </authorList>
    </citation>
    <scope>NUCLEOTIDE SEQUENCE [MRNA]</scope>
</reference>
<reference key="2">
    <citation type="journal article" date="2005" name="Science">
        <title>The transcriptional landscape of the mammalian genome.</title>
        <authorList>
            <person name="Carninci P."/>
            <person name="Kasukawa T."/>
            <person name="Katayama S."/>
            <person name="Gough J."/>
            <person name="Frith M.C."/>
            <person name="Maeda N."/>
            <person name="Oyama R."/>
            <person name="Ravasi T."/>
            <person name="Lenhard B."/>
            <person name="Wells C."/>
            <person name="Kodzius R."/>
            <person name="Shimokawa K."/>
            <person name="Bajic V.B."/>
            <person name="Brenner S.E."/>
            <person name="Batalov S."/>
            <person name="Forrest A.R."/>
            <person name="Zavolan M."/>
            <person name="Davis M.J."/>
            <person name="Wilming L.G."/>
            <person name="Aidinis V."/>
            <person name="Allen J.E."/>
            <person name="Ambesi-Impiombato A."/>
            <person name="Apweiler R."/>
            <person name="Aturaliya R.N."/>
            <person name="Bailey T.L."/>
            <person name="Bansal M."/>
            <person name="Baxter L."/>
            <person name="Beisel K.W."/>
            <person name="Bersano T."/>
            <person name="Bono H."/>
            <person name="Chalk A.M."/>
            <person name="Chiu K.P."/>
            <person name="Choudhary V."/>
            <person name="Christoffels A."/>
            <person name="Clutterbuck D.R."/>
            <person name="Crowe M.L."/>
            <person name="Dalla E."/>
            <person name="Dalrymple B.P."/>
            <person name="de Bono B."/>
            <person name="Della Gatta G."/>
            <person name="di Bernardo D."/>
            <person name="Down T."/>
            <person name="Engstrom P."/>
            <person name="Fagiolini M."/>
            <person name="Faulkner G."/>
            <person name="Fletcher C.F."/>
            <person name="Fukushima T."/>
            <person name="Furuno M."/>
            <person name="Futaki S."/>
            <person name="Gariboldi M."/>
            <person name="Georgii-Hemming P."/>
            <person name="Gingeras T.R."/>
            <person name="Gojobori T."/>
            <person name="Green R.E."/>
            <person name="Gustincich S."/>
            <person name="Harbers M."/>
            <person name="Hayashi Y."/>
            <person name="Hensch T.K."/>
            <person name="Hirokawa N."/>
            <person name="Hill D."/>
            <person name="Huminiecki L."/>
            <person name="Iacono M."/>
            <person name="Ikeo K."/>
            <person name="Iwama A."/>
            <person name="Ishikawa T."/>
            <person name="Jakt M."/>
            <person name="Kanapin A."/>
            <person name="Katoh M."/>
            <person name="Kawasawa Y."/>
            <person name="Kelso J."/>
            <person name="Kitamura H."/>
            <person name="Kitano H."/>
            <person name="Kollias G."/>
            <person name="Krishnan S.P."/>
            <person name="Kruger A."/>
            <person name="Kummerfeld S.K."/>
            <person name="Kurochkin I.V."/>
            <person name="Lareau L.F."/>
            <person name="Lazarevic D."/>
            <person name="Lipovich L."/>
            <person name="Liu J."/>
            <person name="Liuni S."/>
            <person name="McWilliam S."/>
            <person name="Madan Babu M."/>
            <person name="Madera M."/>
            <person name="Marchionni L."/>
            <person name="Matsuda H."/>
            <person name="Matsuzawa S."/>
            <person name="Miki H."/>
            <person name="Mignone F."/>
            <person name="Miyake S."/>
            <person name="Morris K."/>
            <person name="Mottagui-Tabar S."/>
            <person name="Mulder N."/>
            <person name="Nakano N."/>
            <person name="Nakauchi H."/>
            <person name="Ng P."/>
            <person name="Nilsson R."/>
            <person name="Nishiguchi S."/>
            <person name="Nishikawa S."/>
            <person name="Nori F."/>
            <person name="Ohara O."/>
            <person name="Okazaki Y."/>
            <person name="Orlando V."/>
            <person name="Pang K.C."/>
            <person name="Pavan W.J."/>
            <person name="Pavesi G."/>
            <person name="Pesole G."/>
            <person name="Petrovsky N."/>
            <person name="Piazza S."/>
            <person name="Reed J."/>
            <person name="Reid J.F."/>
            <person name="Ring B.Z."/>
            <person name="Ringwald M."/>
            <person name="Rost B."/>
            <person name="Ruan Y."/>
            <person name="Salzberg S.L."/>
            <person name="Sandelin A."/>
            <person name="Schneider C."/>
            <person name="Schoenbach C."/>
            <person name="Sekiguchi K."/>
            <person name="Semple C.A."/>
            <person name="Seno S."/>
            <person name="Sessa L."/>
            <person name="Sheng Y."/>
            <person name="Shibata Y."/>
            <person name="Shimada H."/>
            <person name="Shimada K."/>
            <person name="Silva D."/>
            <person name="Sinclair B."/>
            <person name="Sperling S."/>
            <person name="Stupka E."/>
            <person name="Sugiura K."/>
            <person name="Sultana R."/>
            <person name="Takenaka Y."/>
            <person name="Taki K."/>
            <person name="Tammoja K."/>
            <person name="Tan S.L."/>
            <person name="Tang S."/>
            <person name="Taylor M.S."/>
            <person name="Tegner J."/>
            <person name="Teichmann S.A."/>
            <person name="Ueda H.R."/>
            <person name="van Nimwegen E."/>
            <person name="Verardo R."/>
            <person name="Wei C.L."/>
            <person name="Yagi K."/>
            <person name="Yamanishi H."/>
            <person name="Zabarovsky E."/>
            <person name="Zhu S."/>
            <person name="Zimmer A."/>
            <person name="Hide W."/>
            <person name="Bult C."/>
            <person name="Grimmond S.M."/>
            <person name="Teasdale R.D."/>
            <person name="Liu E.T."/>
            <person name="Brusic V."/>
            <person name="Quackenbush J."/>
            <person name="Wahlestedt C."/>
            <person name="Mattick J.S."/>
            <person name="Hume D.A."/>
            <person name="Kai C."/>
            <person name="Sasaki D."/>
            <person name="Tomaru Y."/>
            <person name="Fukuda S."/>
            <person name="Kanamori-Katayama M."/>
            <person name="Suzuki M."/>
            <person name="Aoki J."/>
            <person name="Arakawa T."/>
            <person name="Iida J."/>
            <person name="Imamura K."/>
            <person name="Itoh M."/>
            <person name="Kato T."/>
            <person name="Kawaji H."/>
            <person name="Kawagashira N."/>
            <person name="Kawashima T."/>
            <person name="Kojima M."/>
            <person name="Kondo S."/>
            <person name="Konno H."/>
            <person name="Nakano K."/>
            <person name="Ninomiya N."/>
            <person name="Nishio T."/>
            <person name="Okada M."/>
            <person name="Plessy C."/>
            <person name="Shibata K."/>
            <person name="Shiraki T."/>
            <person name="Suzuki S."/>
            <person name="Tagami M."/>
            <person name="Waki K."/>
            <person name="Watahiki A."/>
            <person name="Okamura-Oho Y."/>
            <person name="Suzuki H."/>
            <person name="Kawai J."/>
            <person name="Hayashizaki Y."/>
        </authorList>
    </citation>
    <scope>NUCLEOTIDE SEQUENCE [LARGE SCALE MRNA]</scope>
    <source>
        <strain>C57BL/6J</strain>
        <tissue>Embryo</tissue>
    </source>
</reference>
<reference key="3">
    <citation type="journal article" date="2004" name="Genome Res.">
        <title>The status, quality, and expansion of the NIH full-length cDNA project: the Mammalian Gene Collection (MGC).</title>
        <authorList>
            <consortium name="The MGC Project Team"/>
        </authorList>
    </citation>
    <scope>NUCLEOTIDE SEQUENCE [LARGE SCALE MRNA]</scope>
    <source>
        <strain>C57BL/6J</strain>
        <strain>FVB/N</strain>
        <tissue>Mammary tumor</tissue>
    </source>
</reference>
<reference key="4">
    <citation type="journal article" date="2009" name="Biochimie">
        <title>Molecular identification of omega-amidase, the enzyme that is functionally coupled with glutamine transaminases, as the putative tumor suppressor Nit2.</title>
        <authorList>
            <person name="Jaisson S."/>
            <person name="Veiga-da-Cunha M."/>
            <person name="Van Schaftingen E."/>
        </authorList>
    </citation>
    <scope>FUNCTION</scope>
    <scope>CATALYTIC ACTIVITY</scope>
    <scope>BIOPHYSICOCHEMICAL PROPERTIES</scope>
</reference>
<reference key="5">
    <citation type="journal article" date="2009" name="Biochimie">
        <title>Identification of the putative tumor suppressor Nit2 as omega-amidase, an enzyme metabolically linked to glutamine and asparagine transamination.</title>
        <authorList>
            <person name="Krasnikov B.F."/>
            <person name="Chien C.-H."/>
            <person name="Nostramo R."/>
            <person name="Pinto J.T."/>
            <person name="Nieves E."/>
            <person name="Callaway M."/>
            <person name="Sun J."/>
            <person name="Huebner K."/>
            <person name="Cooper A.J.L."/>
        </authorList>
    </citation>
    <scope>SUBUNIT</scope>
</reference>
<reference key="6">
    <citation type="journal article" date="2010" name="Cell">
        <title>A tissue-specific atlas of mouse protein phosphorylation and expression.</title>
        <authorList>
            <person name="Huttlin E.L."/>
            <person name="Jedrychowski M.P."/>
            <person name="Elias J.E."/>
            <person name="Goswami T."/>
            <person name="Rad R."/>
            <person name="Beausoleil S.A."/>
            <person name="Villen J."/>
            <person name="Haas W."/>
            <person name="Sowa M.E."/>
            <person name="Gygi S.P."/>
        </authorList>
    </citation>
    <scope>IDENTIFICATION BY MASS SPECTROMETRY [LARGE SCALE ANALYSIS]</scope>
    <source>
        <tissue>Brain</tissue>
        <tissue>Brown adipose tissue</tissue>
        <tissue>Heart</tissue>
        <tissue>Kidney</tissue>
        <tissue>Liver</tissue>
        <tissue>Lung</tissue>
        <tissue>Pancreas</tissue>
        <tissue>Spleen</tissue>
        <tissue>Testis</tissue>
    </source>
</reference>
<reference key="7">
    <citation type="journal article" date="2013" name="Mol. Cell">
        <title>SIRT5-mediated lysine desuccinylation impacts diverse metabolic pathways.</title>
        <authorList>
            <person name="Park J."/>
            <person name="Chen Y."/>
            <person name="Tishkoff D.X."/>
            <person name="Peng C."/>
            <person name="Tan M."/>
            <person name="Dai L."/>
            <person name="Xie Z."/>
            <person name="Zhang Y."/>
            <person name="Zwaans B.M."/>
            <person name="Skinner M.E."/>
            <person name="Lombard D.B."/>
            <person name="Zhao Y."/>
        </authorList>
    </citation>
    <scope>ACETYLATION [LARGE SCALE ANALYSIS] AT LYS-68</scope>
    <scope>SUCCINYLATION [LARGE SCALE ANALYSIS] AT LYS-68; LYS-123 AND LYS-130</scope>
    <scope>IDENTIFICATION BY MASS SPECTROMETRY [LARGE SCALE ANALYSIS]</scope>
    <source>
        <tissue>Embryonic fibroblast</tissue>
        <tissue>Liver</tissue>
    </source>
</reference>
<reference key="8">
    <citation type="journal article" date="2013" name="Proc. Natl. Acad. Sci. U.S.A.">
        <title>Label-free quantitative proteomics of the lysine acetylome in mitochondria identifies substrates of SIRT3 in metabolic pathways.</title>
        <authorList>
            <person name="Rardin M.J."/>
            <person name="Newman J.C."/>
            <person name="Held J.M."/>
            <person name="Cusack M.P."/>
            <person name="Sorensen D.J."/>
            <person name="Li B."/>
            <person name="Schilling B."/>
            <person name="Mooney S.D."/>
            <person name="Kahn C.R."/>
            <person name="Verdin E."/>
            <person name="Gibson B.W."/>
        </authorList>
    </citation>
    <scope>ACETYLATION [LARGE SCALE ANALYSIS] AT LYS-68</scope>
    <scope>IDENTIFICATION BY MASS SPECTROMETRY [LARGE SCALE ANALYSIS]</scope>
    <source>
        <tissue>Liver</tissue>
    </source>
</reference>
<reference key="9">
    <citation type="journal article" date="2017" name="Proc. Natl. Acad. Sci. U.S.A.">
        <title>Nit1 is a metabolite repair enzyme that hydrolyzes deaminated glutathione.</title>
        <authorList>
            <person name="Peracchi A."/>
            <person name="Veiga-da-Cunha M."/>
            <person name="Kuhara T."/>
            <person name="Ellens K.W."/>
            <person name="Paczia N."/>
            <person name="Stroobant V."/>
            <person name="Seliga A.K."/>
            <person name="Marlaire S."/>
            <person name="Jaisson S."/>
            <person name="Bommer G.T."/>
            <person name="Sun J."/>
            <person name="Huebner K."/>
            <person name="Linster C.L."/>
            <person name="Cooper A.J.L."/>
            <person name="Van Schaftingen E."/>
        </authorList>
    </citation>
    <scope>CATALYTIC ACTIVITY</scope>
    <scope>BIOPHYSICOCHEMICAL PROPERTIES</scope>
</reference>
<reference key="10">
    <citation type="journal article" date="2008" name="Biochemistry">
        <title>Functional proteomic and structural insights into molecular recognition in the nitrilase family enzymes.</title>
        <authorList>
            <person name="Barglow K.T."/>
            <person name="Saikatendu K.S."/>
            <person name="Bracey M.H."/>
            <person name="Huey R."/>
            <person name="Morris G.M."/>
            <person name="Olson A.J."/>
            <person name="Stevens R.C."/>
            <person name="Cravatt B.F."/>
        </authorList>
    </citation>
    <scope>X-RAY CRYSTALLOGRAPHY (1.49 ANGSTROMS)</scope>
    <scope>HOMODIMERIZATION</scope>
</reference>
<protein>
    <recommendedName>
        <fullName evidence="6">Omega-amidase NIT2</fullName>
        <ecNumber evidence="4 5">3.5.1.3</ecNumber>
    </recommendedName>
    <alternativeName>
        <fullName evidence="7">Nitrilase homolog 2</fullName>
    </alternativeName>
</protein>
<comment type="function">
    <text evidence="4 5">Has omega-amidase activity (PubMed:19596042, PubMed:28373563). The role of omega-amidase is to remove potentially toxic intermediates by converting 2-oxoglutaramate and 2-oxosuccinamate to biologically useful 2-oxoglutarate and oxaloacetate, respectively (PubMed:19596042). Can also hydrolyze gamma-monomethyl-alpha-ketoglutarate in vitro (PubMed:19596042).</text>
</comment>
<comment type="catalytic activity">
    <reaction evidence="4 5">
        <text>a monoamide of a dicarboxylate + H2O = a dicarboxylate + NH4(+)</text>
        <dbReference type="Rhea" id="RHEA:11716"/>
        <dbReference type="ChEBI" id="CHEBI:15377"/>
        <dbReference type="ChEBI" id="CHEBI:28938"/>
        <dbReference type="ChEBI" id="CHEBI:28965"/>
        <dbReference type="ChEBI" id="CHEBI:77450"/>
        <dbReference type="EC" id="3.5.1.3"/>
    </reaction>
    <physiologicalReaction direction="left-to-right" evidence="4 5">
        <dbReference type="Rhea" id="RHEA:11717"/>
    </physiologicalReaction>
</comment>
<comment type="catalytic activity">
    <reaction evidence="4 5">
        <text>2-oxoglutaramate + H2O = 2-oxoglutarate + NH4(+)</text>
        <dbReference type="Rhea" id="RHEA:32963"/>
        <dbReference type="ChEBI" id="CHEBI:15377"/>
        <dbReference type="ChEBI" id="CHEBI:16769"/>
        <dbReference type="ChEBI" id="CHEBI:16810"/>
        <dbReference type="ChEBI" id="CHEBI:28938"/>
        <dbReference type="EC" id="3.5.1.3"/>
    </reaction>
    <physiologicalReaction direction="left-to-right" evidence="4 5">
        <dbReference type="Rhea" id="RHEA:32964"/>
    </physiologicalReaction>
</comment>
<comment type="catalytic activity">
    <reaction evidence="4">
        <text>2-oxosuccinamate + H2O = oxaloacetate + NH4(+)</text>
        <dbReference type="Rhea" id="RHEA:59412"/>
        <dbReference type="ChEBI" id="CHEBI:15377"/>
        <dbReference type="ChEBI" id="CHEBI:16452"/>
        <dbReference type="ChEBI" id="CHEBI:28938"/>
        <dbReference type="ChEBI" id="CHEBI:57735"/>
        <dbReference type="EC" id="3.5.1.3"/>
    </reaction>
    <physiologicalReaction direction="left-to-right" evidence="4">
        <dbReference type="Rhea" id="RHEA:59413"/>
    </physiologicalReaction>
</comment>
<comment type="biophysicochemical properties">
    <kinetics>
        <KM evidence="4">0.195 mM for 2-oxoglutaramate (at pH 8.5)</KM>
        <KM evidence="5">0.25 mM for 2-oxoglutaramate (at pH 8.5)</KM>
        <KM evidence="4">1.48 mM for glutaramate (at pH 7.2)</KM>
        <KM evidence="4">1.27 mM for glutaramate (at pH 8.5)</KM>
        <KM evidence="4">0.14 mM for succinamate (at pH 8.5)</KM>
        <KM evidence="4">0.017 mM for 2-oxosuccinamate (at pH 8.5)</KM>
        <KM evidence="4">0.003 mM for 2-oxosuccinamate (at pH 7.2)</KM>
        <KM evidence="4">0.012 mM for gamma-monomethyl-alpha-ketoglutarate (at pH 7.2)</KM>
        <Vmax evidence="4">32.0 umol/min/mg enzyme with 2-oxoglutaramate as substrate (at pH 8.5)</Vmax>
        <Vmax evidence="5">19.4 umol/min/mg enzyme with 2-oxoglutaramate as substrate (at pH 8.5)</Vmax>
        <Vmax evidence="4">1.6 umol/min/mg enzyme with 2-oxosuccinamate as substrate (at pH 8.5)</Vmax>
        <Vmax evidence="4">16.0 umol/min/mg enzyme with glutaramate as substrate (at pH 8.5)</Vmax>
        <Vmax evidence="4">5.1 umol/min/mg enzyme with succinamate as substrate (at pH 8.5)</Vmax>
        <Vmax evidence="4">245.2 umol/min/mg enzyme with gamma-monomethyl-alpha-ketoglutarate as substrate (at pH 7.2)</Vmax>
        <Vmax evidence="4">7.5 umol/min/mg enzyme with glutaramate as substrate (at pH 7.2)</Vmax>
        <Vmax evidence="4">3.6 umol/min/mg enzyme with succinamate as substrate (at pH 7.2)</Vmax>
        <Vmax evidence="4">2.1 umol/min/mg enzyme with 2-oxosuccinamate as substrate (at pH 7.2)</Vmax>
        <text evidence="4 5">In solution, 2-oxoglutaramate is in equilibrium with a cyclic form (2-hydroxy-5-oxoproline), and at pH 8.0 or above, the rate of ring opening is no longer limiting for the omega-amidase reaction (PubMed:19596042). kcat is 10.7 sec(-1) with 2-oxoglutaramate as substrate (PubMed:28373563).</text>
    </kinetics>
</comment>
<comment type="subunit">
    <text evidence="3 8">Homodimer.</text>
</comment>
<comment type="subcellular location">
    <subcellularLocation>
        <location evidence="1">Cytoplasm</location>
    </subcellularLocation>
</comment>
<comment type="similarity">
    <text evidence="7">Belongs to the carbon-nitrogen hydrolase superfamily. NIT1/NIT2 family.</text>
</comment>